<name>THIC_PSEAE</name>
<reference key="1">
    <citation type="journal article" date="2000" name="Nature">
        <title>Complete genome sequence of Pseudomonas aeruginosa PAO1, an opportunistic pathogen.</title>
        <authorList>
            <person name="Stover C.K."/>
            <person name="Pham X.-Q.T."/>
            <person name="Erwin A.L."/>
            <person name="Mizoguchi S.D."/>
            <person name="Warrener P."/>
            <person name="Hickey M.J."/>
            <person name="Brinkman F.S.L."/>
            <person name="Hufnagle W.O."/>
            <person name="Kowalik D.J."/>
            <person name="Lagrou M."/>
            <person name="Garber R.L."/>
            <person name="Goltry L."/>
            <person name="Tolentino E."/>
            <person name="Westbrock-Wadman S."/>
            <person name="Yuan Y."/>
            <person name="Brody L.L."/>
            <person name="Coulter S.N."/>
            <person name="Folger K.R."/>
            <person name="Kas A."/>
            <person name="Larbig K."/>
            <person name="Lim R.M."/>
            <person name="Smith K.A."/>
            <person name="Spencer D.H."/>
            <person name="Wong G.K.-S."/>
            <person name="Wu Z."/>
            <person name="Paulsen I.T."/>
            <person name="Reizer J."/>
            <person name="Saier M.H. Jr."/>
            <person name="Hancock R.E.W."/>
            <person name="Lory S."/>
            <person name="Olson M.V."/>
        </authorList>
    </citation>
    <scope>NUCLEOTIDE SEQUENCE [LARGE SCALE GENOMIC DNA]</scope>
    <source>
        <strain>ATCC 15692 / DSM 22644 / CIP 104116 / JCM 14847 / LMG 12228 / 1C / PRS 101 / PAO1</strain>
    </source>
</reference>
<proteinExistence type="inferred from homology"/>
<gene>
    <name evidence="1" type="primary">thiC</name>
    <name type="ordered locus">PA4973</name>
</gene>
<comment type="function">
    <text evidence="1">Catalyzes the synthesis of the hydroxymethylpyrimidine phosphate (HMP-P) moiety of thiamine from aminoimidazole ribotide (AIR) in a radical S-adenosyl-L-methionine (SAM)-dependent reaction.</text>
</comment>
<comment type="catalytic activity">
    <reaction evidence="1">
        <text>5-amino-1-(5-phospho-beta-D-ribosyl)imidazole + S-adenosyl-L-methionine = 4-amino-2-methyl-5-(phosphooxymethyl)pyrimidine + CO + 5'-deoxyadenosine + formate + L-methionine + 3 H(+)</text>
        <dbReference type="Rhea" id="RHEA:24840"/>
        <dbReference type="ChEBI" id="CHEBI:15378"/>
        <dbReference type="ChEBI" id="CHEBI:15740"/>
        <dbReference type="ChEBI" id="CHEBI:17245"/>
        <dbReference type="ChEBI" id="CHEBI:17319"/>
        <dbReference type="ChEBI" id="CHEBI:57844"/>
        <dbReference type="ChEBI" id="CHEBI:58354"/>
        <dbReference type="ChEBI" id="CHEBI:59789"/>
        <dbReference type="ChEBI" id="CHEBI:137981"/>
        <dbReference type="EC" id="4.1.99.17"/>
    </reaction>
</comment>
<comment type="cofactor">
    <cofactor evidence="1">
        <name>[4Fe-4S] cluster</name>
        <dbReference type="ChEBI" id="CHEBI:49883"/>
    </cofactor>
    <text evidence="1">Binds 1 [4Fe-4S] cluster per subunit. The cluster is coordinated with 3 cysteines and an exchangeable S-adenosyl-L-methionine.</text>
</comment>
<comment type="pathway">
    <text evidence="1">Cofactor biosynthesis; thiamine diphosphate biosynthesis.</text>
</comment>
<comment type="subunit">
    <text evidence="1">Homodimer.</text>
</comment>
<comment type="similarity">
    <text evidence="1">Belongs to the ThiC family.</text>
</comment>
<feature type="chain" id="PRO_0000152825" description="Phosphomethylpyrimidine synthase">
    <location>
        <begin position="1"/>
        <end position="627"/>
    </location>
</feature>
<feature type="region of interest" description="Disordered" evidence="2">
    <location>
        <begin position="1"/>
        <end position="29"/>
    </location>
</feature>
<feature type="compositionally biased region" description="Polar residues" evidence="2">
    <location>
        <begin position="1"/>
        <end position="24"/>
    </location>
</feature>
<feature type="binding site" evidence="1">
    <location>
        <position position="231"/>
    </location>
    <ligand>
        <name>substrate</name>
    </ligand>
</feature>
<feature type="binding site" evidence="1">
    <location>
        <position position="260"/>
    </location>
    <ligand>
        <name>substrate</name>
    </ligand>
</feature>
<feature type="binding site" evidence="1">
    <location>
        <position position="289"/>
    </location>
    <ligand>
        <name>substrate</name>
    </ligand>
</feature>
<feature type="binding site" evidence="1">
    <location>
        <position position="325"/>
    </location>
    <ligand>
        <name>substrate</name>
    </ligand>
</feature>
<feature type="binding site" evidence="1">
    <location>
        <begin position="345"/>
        <end position="347"/>
    </location>
    <ligand>
        <name>substrate</name>
    </ligand>
</feature>
<feature type="binding site" evidence="1">
    <location>
        <begin position="386"/>
        <end position="389"/>
    </location>
    <ligand>
        <name>substrate</name>
    </ligand>
</feature>
<feature type="binding site" evidence="1">
    <location>
        <position position="425"/>
    </location>
    <ligand>
        <name>substrate</name>
    </ligand>
</feature>
<feature type="binding site" evidence="1">
    <location>
        <position position="429"/>
    </location>
    <ligand>
        <name>Zn(2+)</name>
        <dbReference type="ChEBI" id="CHEBI:29105"/>
    </ligand>
</feature>
<feature type="binding site" evidence="1">
    <location>
        <position position="452"/>
    </location>
    <ligand>
        <name>substrate</name>
    </ligand>
</feature>
<feature type="binding site" evidence="1">
    <location>
        <position position="493"/>
    </location>
    <ligand>
        <name>Zn(2+)</name>
        <dbReference type="ChEBI" id="CHEBI:29105"/>
    </ligand>
</feature>
<feature type="binding site" evidence="1">
    <location>
        <position position="573"/>
    </location>
    <ligand>
        <name>[4Fe-4S] cluster</name>
        <dbReference type="ChEBI" id="CHEBI:49883"/>
        <note>4Fe-4S-S-AdoMet</note>
    </ligand>
</feature>
<feature type="binding site" evidence="1">
    <location>
        <position position="576"/>
    </location>
    <ligand>
        <name>[4Fe-4S] cluster</name>
        <dbReference type="ChEBI" id="CHEBI:49883"/>
        <note>4Fe-4S-S-AdoMet</note>
    </ligand>
</feature>
<feature type="binding site" evidence="1">
    <location>
        <position position="581"/>
    </location>
    <ligand>
        <name>[4Fe-4S] cluster</name>
        <dbReference type="ChEBI" id="CHEBI:49883"/>
        <note>4Fe-4S-S-AdoMet</note>
    </ligand>
</feature>
<protein>
    <recommendedName>
        <fullName evidence="1">Phosphomethylpyrimidine synthase</fullName>
        <ecNumber evidence="1">4.1.99.17</ecNumber>
    </recommendedName>
    <alternativeName>
        <fullName evidence="1">Hydroxymethylpyrimidine phosphate synthase</fullName>
        <shortName evidence="1">HMP-P synthase</shortName>
        <shortName evidence="1">HMP-phosphate synthase</shortName>
        <shortName evidence="1">HMPP synthase</shortName>
    </alternativeName>
    <alternativeName>
        <fullName evidence="1">Thiamine biosynthesis protein ThiC</fullName>
    </alternativeName>
</protein>
<sequence>MSATQKNNITRLEQLDRQSTQPFPNSRKVYLTGSRPDIRVPVREISLADTPTAFGGEKNPPVFVYDTSGPYTDPEVRIDLRKGLPDVRSRWIDERGDTEILPGLTSEFGQARLADASLDALRFAHVRTPRRAKPGANVSQMHYAKKGIITPEMEYIAIRENMKLQEARAAGLLDQQHPGHSFGANIPKEITPEFVREEVARGRAIIPANINHTELEPMIIGRNFLVKINGNIGNSALGSSIEEEVEKLTWGIRWGADTVMDLSTGKHIHETREWILRNSPVPIGTVPIYQALEKVNGVAEDLTWEIFRDTLIEQAEQGVDYFTIHAGVLLRYVPLTAKRVTGIVSRGGSIMAKWCLAHHQENFLYTHFEEICEIMKAYDVSFSLGDGLRPGSVADANDAAQFGELETLGELTKIAWKHDVQVMIEGPGHVPMQLIKENMDKQLECCDEAPFYTLGPLTTDIAPGYDHITSGIGAAMIGWFGCAMLCYVTPKEHLGLPNKDDVKTGIITYKIAAHAADLAKGHPGAQIRDNALSKARFEFRWEDQFNLGLDPDTARAFHDETLPKDSAKVAHFCSMCGPKFCSMKITQEVRDYAKENGLSDESKAIEAGFQEQAARFKDEGSVIYRQV</sequence>
<accession>Q9HUJ2</accession>
<organism>
    <name type="scientific">Pseudomonas aeruginosa (strain ATCC 15692 / DSM 22644 / CIP 104116 / JCM 14847 / LMG 12228 / 1C / PRS 101 / PAO1)</name>
    <dbReference type="NCBI Taxonomy" id="208964"/>
    <lineage>
        <taxon>Bacteria</taxon>
        <taxon>Pseudomonadati</taxon>
        <taxon>Pseudomonadota</taxon>
        <taxon>Gammaproteobacteria</taxon>
        <taxon>Pseudomonadales</taxon>
        <taxon>Pseudomonadaceae</taxon>
        <taxon>Pseudomonas</taxon>
    </lineage>
</organism>
<evidence type="ECO:0000255" key="1">
    <source>
        <dbReference type="HAMAP-Rule" id="MF_00089"/>
    </source>
</evidence>
<evidence type="ECO:0000256" key="2">
    <source>
        <dbReference type="SAM" id="MobiDB-lite"/>
    </source>
</evidence>
<dbReference type="EC" id="4.1.99.17" evidence="1"/>
<dbReference type="EMBL" id="AE004091">
    <property type="protein sequence ID" value="AAG08358.1"/>
    <property type="molecule type" value="Genomic_DNA"/>
</dbReference>
<dbReference type="PIR" id="C83024">
    <property type="entry name" value="C83024"/>
</dbReference>
<dbReference type="RefSeq" id="NP_253660.1">
    <property type="nucleotide sequence ID" value="NC_002516.2"/>
</dbReference>
<dbReference type="RefSeq" id="WP_003095696.1">
    <property type="nucleotide sequence ID" value="NZ_QZGE01000002.1"/>
</dbReference>
<dbReference type="SMR" id="Q9HUJ2"/>
<dbReference type="FunCoup" id="Q9HUJ2">
    <property type="interactions" value="572"/>
</dbReference>
<dbReference type="STRING" id="208964.PA4973"/>
<dbReference type="PaxDb" id="208964-PA4973"/>
<dbReference type="GeneID" id="879702"/>
<dbReference type="KEGG" id="pae:PA4973"/>
<dbReference type="PATRIC" id="fig|208964.12.peg.5207"/>
<dbReference type="PseudoCAP" id="PA4973"/>
<dbReference type="HOGENOM" id="CLU_013181_2_1_6"/>
<dbReference type="InParanoid" id="Q9HUJ2"/>
<dbReference type="OrthoDB" id="9805897at2"/>
<dbReference type="PhylomeDB" id="Q9HUJ2"/>
<dbReference type="BioCyc" id="PAER208964:G1FZ6-5089-MONOMER"/>
<dbReference type="UniPathway" id="UPA00060"/>
<dbReference type="Proteomes" id="UP000002438">
    <property type="component" value="Chromosome"/>
</dbReference>
<dbReference type="GO" id="GO:0005829">
    <property type="term" value="C:cytosol"/>
    <property type="evidence" value="ECO:0000318"/>
    <property type="project" value="GO_Central"/>
</dbReference>
<dbReference type="GO" id="GO:0051539">
    <property type="term" value="F:4 iron, 4 sulfur cluster binding"/>
    <property type="evidence" value="ECO:0007669"/>
    <property type="project" value="UniProtKB-KW"/>
</dbReference>
<dbReference type="GO" id="GO:0016830">
    <property type="term" value="F:carbon-carbon lyase activity"/>
    <property type="evidence" value="ECO:0007669"/>
    <property type="project" value="InterPro"/>
</dbReference>
<dbReference type="GO" id="GO:0008270">
    <property type="term" value="F:zinc ion binding"/>
    <property type="evidence" value="ECO:0007669"/>
    <property type="project" value="UniProtKB-UniRule"/>
</dbReference>
<dbReference type="GO" id="GO:0009228">
    <property type="term" value="P:thiamine biosynthetic process"/>
    <property type="evidence" value="ECO:0000318"/>
    <property type="project" value="GO_Central"/>
</dbReference>
<dbReference type="GO" id="GO:0009229">
    <property type="term" value="P:thiamine diphosphate biosynthetic process"/>
    <property type="evidence" value="ECO:0007669"/>
    <property type="project" value="UniProtKB-UniRule"/>
</dbReference>
<dbReference type="FunFam" id="3.20.20.540:FF:000001">
    <property type="entry name" value="Phosphomethylpyrimidine synthase"/>
    <property type="match status" value="1"/>
</dbReference>
<dbReference type="Gene3D" id="6.10.250.620">
    <property type="match status" value="1"/>
</dbReference>
<dbReference type="Gene3D" id="3.20.20.540">
    <property type="entry name" value="Radical SAM ThiC family, central domain"/>
    <property type="match status" value="1"/>
</dbReference>
<dbReference type="HAMAP" id="MF_00089">
    <property type="entry name" value="ThiC"/>
    <property type="match status" value="1"/>
</dbReference>
<dbReference type="InterPro" id="IPR037509">
    <property type="entry name" value="ThiC"/>
</dbReference>
<dbReference type="InterPro" id="IPR025747">
    <property type="entry name" value="ThiC-associated_dom"/>
</dbReference>
<dbReference type="InterPro" id="IPR038521">
    <property type="entry name" value="ThiC/Bza_core_dom"/>
</dbReference>
<dbReference type="InterPro" id="IPR002817">
    <property type="entry name" value="ThiC/BzaA/B"/>
</dbReference>
<dbReference type="NCBIfam" id="NF006763">
    <property type="entry name" value="PRK09284.1"/>
    <property type="match status" value="1"/>
</dbReference>
<dbReference type="NCBIfam" id="NF009895">
    <property type="entry name" value="PRK13352.1"/>
    <property type="match status" value="1"/>
</dbReference>
<dbReference type="NCBIfam" id="TIGR00190">
    <property type="entry name" value="thiC"/>
    <property type="match status" value="1"/>
</dbReference>
<dbReference type="PANTHER" id="PTHR30557:SF1">
    <property type="entry name" value="PHOSPHOMETHYLPYRIMIDINE SYNTHASE, CHLOROPLASTIC"/>
    <property type="match status" value="1"/>
</dbReference>
<dbReference type="PANTHER" id="PTHR30557">
    <property type="entry name" value="THIAMINE BIOSYNTHESIS PROTEIN THIC"/>
    <property type="match status" value="1"/>
</dbReference>
<dbReference type="Pfam" id="PF13667">
    <property type="entry name" value="ThiC-associated"/>
    <property type="match status" value="1"/>
</dbReference>
<dbReference type="Pfam" id="PF01964">
    <property type="entry name" value="ThiC_Rad_SAM"/>
    <property type="match status" value="1"/>
</dbReference>
<dbReference type="SFLD" id="SFLDF00407">
    <property type="entry name" value="phosphomethylpyrimidine_syntha"/>
    <property type="match status" value="1"/>
</dbReference>
<dbReference type="SFLD" id="SFLDG01114">
    <property type="entry name" value="phosphomethylpyrimidine_syntha"/>
    <property type="match status" value="1"/>
</dbReference>
<dbReference type="SFLD" id="SFLDS00113">
    <property type="entry name" value="Radical_SAM_Phosphomethylpyrim"/>
    <property type="match status" value="1"/>
</dbReference>
<keyword id="KW-0004">4Fe-4S</keyword>
<keyword id="KW-0408">Iron</keyword>
<keyword id="KW-0411">Iron-sulfur</keyword>
<keyword id="KW-0456">Lyase</keyword>
<keyword id="KW-0479">Metal-binding</keyword>
<keyword id="KW-1185">Reference proteome</keyword>
<keyword id="KW-0949">S-adenosyl-L-methionine</keyword>
<keyword id="KW-0784">Thiamine biosynthesis</keyword>
<keyword id="KW-0862">Zinc</keyword>